<reference key="1">
    <citation type="journal article" date="1995" name="Mol. Gen. Genet.">
        <title>The cycHJKL gene cluster plays an essential role in the biogenesis of c-type cytochromes in Bradyrhizobium japonicum.</title>
        <authorList>
            <person name="Ritz D."/>
            <person name="Thoeny-Meyer L."/>
            <person name="Hennecke H."/>
        </authorList>
    </citation>
    <scope>NUCLEOTIDE SEQUENCE [GENOMIC DNA]</scope>
    <source>
        <strain>USDA 110spc4</strain>
    </source>
</reference>
<reference key="2">
    <citation type="journal article" date="2002" name="DNA Res.">
        <title>Complete genomic sequence of nitrogen-fixing symbiotic bacterium Bradyrhizobium japonicum USDA110.</title>
        <authorList>
            <person name="Kaneko T."/>
            <person name="Nakamura Y."/>
            <person name="Sato S."/>
            <person name="Minamisawa K."/>
            <person name="Uchiumi T."/>
            <person name="Sasamoto S."/>
            <person name="Watanabe A."/>
            <person name="Idesawa K."/>
            <person name="Iriguchi M."/>
            <person name="Kawashima K."/>
            <person name="Kohara M."/>
            <person name="Matsumoto M."/>
            <person name="Shimpo S."/>
            <person name="Tsuruoka H."/>
            <person name="Wada T."/>
            <person name="Yamada M."/>
            <person name="Tabata S."/>
        </authorList>
    </citation>
    <scope>NUCLEOTIDE SEQUENCE [LARGE SCALE GENOMIC DNA]</scope>
    <source>
        <strain>JCM 10833 / BCRC 13528 / IAM 13628 / NBRC 14792 / USDA 110</strain>
    </source>
</reference>
<name>CCMH_BRADU</name>
<sequence>MRRMMAAFVALALLASPAVHAVQPDEIMSDPAKETRARDLSRELRCMVCQNQSIDDSDAPLARDLRLLVRERIAAGDSNSQVLDFLVARYGEFVLLKPRFERQTLLLWLLGPLLLTGGGLALWLQIRRRSRSGADLPAPPLTPDEEARLAALMSDEAKSS</sequence>
<comment type="function">
    <text>Required for the biogenesis of c-type cytochromes. Possible subunit of a heme lyase.</text>
</comment>
<comment type="subcellular location">
    <subcellularLocation>
        <location evidence="2">Membrane</location>
        <topology evidence="2">Single-pass membrane protein</topology>
        <orientation evidence="2">Periplasmic side</orientation>
    </subcellularLocation>
</comment>
<comment type="similarity">
    <text evidence="2">Belongs to the CcmH/CycL/Ccl2/NrfF family.</text>
</comment>
<organism>
    <name type="scientific">Bradyrhizobium diazoefficiens (strain JCM 10833 / BCRC 13528 / IAM 13628 / NBRC 14792 / USDA 110)</name>
    <dbReference type="NCBI Taxonomy" id="224911"/>
    <lineage>
        <taxon>Bacteria</taxon>
        <taxon>Pseudomonadati</taxon>
        <taxon>Pseudomonadota</taxon>
        <taxon>Alphaproteobacteria</taxon>
        <taxon>Hyphomicrobiales</taxon>
        <taxon>Nitrobacteraceae</taxon>
        <taxon>Bradyrhizobium</taxon>
    </lineage>
</organism>
<protein>
    <recommendedName>
        <fullName>Cytochrome c-type biogenesis protein CcmH</fullName>
    </recommendedName>
    <alternativeName>
        <fullName>Cytochrome c-type biogenesis protein CycL</fullName>
    </alternativeName>
</protein>
<feature type="signal peptide" evidence="1">
    <location>
        <begin position="1"/>
        <end position="21"/>
    </location>
</feature>
<feature type="chain" id="PRO_0000006608" description="Cytochrome c-type biogenesis protein CcmH">
    <location>
        <begin position="22"/>
        <end position="160"/>
    </location>
</feature>
<feature type="transmembrane region" description="Helical" evidence="1">
    <location>
        <begin position="104"/>
        <end position="124"/>
    </location>
</feature>
<feature type="binding site" description="covalent" evidence="1">
    <location>
        <position position="46"/>
    </location>
    <ligand>
        <name>heme</name>
        <dbReference type="ChEBI" id="CHEBI:30413"/>
    </ligand>
</feature>
<feature type="binding site" description="covalent" evidence="1">
    <location>
        <position position="49"/>
    </location>
    <ligand>
        <name>heme</name>
        <dbReference type="ChEBI" id="CHEBI:30413"/>
    </ligand>
</feature>
<feature type="sequence conflict" description="In Ref. 1; CAA80245/CAA86576." evidence="2" ref="1">
    <original>A</original>
    <variation>G</variation>
    <location>
        <position position="75"/>
    </location>
</feature>
<keyword id="KW-0201">Cytochrome c-type biogenesis</keyword>
<keyword id="KW-0349">Heme</keyword>
<keyword id="KW-0408">Iron</keyword>
<keyword id="KW-0472">Membrane</keyword>
<keyword id="KW-0479">Metal-binding</keyword>
<keyword id="KW-1185">Reference proteome</keyword>
<keyword id="KW-0732">Signal</keyword>
<keyword id="KW-0812">Transmembrane</keyword>
<keyword id="KW-1133">Transmembrane helix</keyword>
<dbReference type="EMBL" id="Z22517">
    <property type="protein sequence ID" value="CAA80245.1"/>
    <property type="molecule type" value="Genomic_DNA"/>
</dbReference>
<dbReference type="EMBL" id="Z46607">
    <property type="protein sequence ID" value="CAA86576.1"/>
    <property type="molecule type" value="Genomic_DNA"/>
</dbReference>
<dbReference type="EMBL" id="BA000040">
    <property type="protein sequence ID" value="BAC48393.1"/>
    <property type="molecule type" value="Genomic_DNA"/>
</dbReference>
<dbReference type="PIR" id="S54747">
    <property type="entry name" value="S54747"/>
</dbReference>
<dbReference type="RefSeq" id="NP_769768.1">
    <property type="nucleotide sequence ID" value="NC_004463.1"/>
</dbReference>
<dbReference type="RefSeq" id="WP_011085912.1">
    <property type="nucleotide sequence ID" value="NC_004463.1"/>
</dbReference>
<dbReference type="SMR" id="P45405"/>
<dbReference type="FunCoup" id="P45405">
    <property type="interactions" value="181"/>
</dbReference>
<dbReference type="STRING" id="224911.AAV28_12665"/>
<dbReference type="EnsemblBacteria" id="BAC48393">
    <property type="protein sequence ID" value="BAC48393"/>
    <property type="gene ID" value="BAC48393"/>
</dbReference>
<dbReference type="GeneID" id="46490166"/>
<dbReference type="KEGG" id="bja:blr3128"/>
<dbReference type="PATRIC" id="fig|224911.44.peg.2761"/>
<dbReference type="eggNOG" id="COG3088">
    <property type="taxonomic scope" value="Bacteria"/>
</dbReference>
<dbReference type="HOGENOM" id="CLU_107187_2_0_5"/>
<dbReference type="InParanoid" id="P45405"/>
<dbReference type="OrthoDB" id="9804975at2"/>
<dbReference type="PhylomeDB" id="P45405"/>
<dbReference type="Proteomes" id="UP000002526">
    <property type="component" value="Chromosome"/>
</dbReference>
<dbReference type="GO" id="GO:0016020">
    <property type="term" value="C:membrane"/>
    <property type="evidence" value="ECO:0007669"/>
    <property type="project" value="UniProtKB-SubCell"/>
</dbReference>
<dbReference type="GO" id="GO:0046872">
    <property type="term" value="F:metal ion binding"/>
    <property type="evidence" value="ECO:0007669"/>
    <property type="project" value="UniProtKB-KW"/>
</dbReference>
<dbReference type="GO" id="GO:0017004">
    <property type="term" value="P:cytochrome complex assembly"/>
    <property type="evidence" value="ECO:0007669"/>
    <property type="project" value="UniProtKB-KW"/>
</dbReference>
<dbReference type="CDD" id="cd16378">
    <property type="entry name" value="CcmH_N"/>
    <property type="match status" value="1"/>
</dbReference>
<dbReference type="FunFam" id="1.10.8.640:FF:000001">
    <property type="entry name" value="Cytochrome c-type biogenesis protein"/>
    <property type="match status" value="1"/>
</dbReference>
<dbReference type="Gene3D" id="1.10.8.640">
    <property type="entry name" value="Cytochrome C biogenesis protein"/>
    <property type="match status" value="1"/>
</dbReference>
<dbReference type="InterPro" id="IPR005616">
    <property type="entry name" value="CcmH/CycL/Ccl2/NrfF_N"/>
</dbReference>
<dbReference type="InterPro" id="IPR038297">
    <property type="entry name" value="CcmH/CycL/NrfF/Ccl2_sf"/>
</dbReference>
<dbReference type="PANTHER" id="PTHR47601">
    <property type="match status" value="1"/>
</dbReference>
<dbReference type="PANTHER" id="PTHR47601:SF1">
    <property type="entry name" value="CYTOCHROME C-TYPE BIOGENESIS CCMH-LIKE MITOCHONDRIAL PROTEIN"/>
    <property type="match status" value="1"/>
</dbReference>
<dbReference type="Pfam" id="PF03918">
    <property type="entry name" value="CcmH"/>
    <property type="match status" value="1"/>
</dbReference>
<proteinExistence type="inferred from homology"/>
<accession>P45405</accession>
<evidence type="ECO:0000255" key="1"/>
<evidence type="ECO:0000305" key="2"/>
<gene>
    <name type="primary">ccmH</name>
    <name type="synonym">cycL</name>
    <name type="ordered locus">blr3128</name>
</gene>